<feature type="chain" id="PRO_0000108971" description="UDP-N-acetylmuramoylalanine--D-glutamate ligase">
    <location>
        <begin position="1"/>
        <end position="466"/>
    </location>
</feature>
<feature type="binding site" evidence="1">
    <location>
        <begin position="128"/>
        <end position="134"/>
    </location>
    <ligand>
        <name>ATP</name>
        <dbReference type="ChEBI" id="CHEBI:30616"/>
    </ligand>
</feature>
<reference key="1">
    <citation type="journal article" date="2004" name="Proc. Natl. Acad. Sci. U.S.A.">
        <title>The louse-borne human pathogen Bartonella quintana is a genomic derivative of the zoonotic agent Bartonella henselae.</title>
        <authorList>
            <person name="Alsmark U.C.M."/>
            <person name="Frank A.C."/>
            <person name="Karlberg E.O."/>
            <person name="Legault B.-A."/>
            <person name="Ardell D.H."/>
            <person name="Canbaeck B."/>
            <person name="Eriksson A.-S."/>
            <person name="Naeslund A.K."/>
            <person name="Handley S.A."/>
            <person name="Huvet M."/>
            <person name="La Scola B."/>
            <person name="Holmberg M."/>
            <person name="Andersson S.G.E."/>
        </authorList>
    </citation>
    <scope>NUCLEOTIDE SEQUENCE [LARGE SCALE GENOMIC DNA]</scope>
    <source>
        <strain>ATCC 49882 / DSM 28221 / CCUG 30454 / Houston 1</strain>
    </source>
</reference>
<sequence>MISIAFYKGKKVALFGLGKSGLATAQALISGGADVVAWDDNPSGVQAAHRENIPARNLQYENWSEFVALILAPGVPLTYPQPHWVVDKARQANIEIIGDIELFVRARNHFLQQYGFCDEDVPFIAITGTNGKSTTTALLAHLLEQMGYDVQMGGNIGTAILTLKPFVKKRIYVIECSSFQIDLAPSLQPTIGLLLNLTPDHIDRHGSFAHYVNAKKNLVTGASQAFISVDDAACQVLYRQLLHEGHHVEAVSKEHFVENGFYADGTQLFSVCQGRRHMLADLASMAALRGSHNAQNALMALATLQALKITDPHMNKHLASYQGLAHRMQQVRKMGSVLFINDSKATNAEASAPALAAFNNIFWIVGGQAKEAGIVSLRGFFHKIRKAYLIGAAAEEFAGVIGSSFPFSMSLTLENAVHEAAVDAMRCKAKEVVVLFSPACASYDQFKNYEVRGEAFISFVMQLKET</sequence>
<accession>Q6G2Q3</accession>
<comment type="function">
    <text evidence="1">Cell wall formation. Catalyzes the addition of glutamate to the nucleotide precursor UDP-N-acetylmuramoyl-L-alanine (UMA).</text>
</comment>
<comment type="catalytic activity">
    <reaction evidence="1">
        <text>UDP-N-acetyl-alpha-D-muramoyl-L-alanine + D-glutamate + ATP = UDP-N-acetyl-alpha-D-muramoyl-L-alanyl-D-glutamate + ADP + phosphate + H(+)</text>
        <dbReference type="Rhea" id="RHEA:16429"/>
        <dbReference type="ChEBI" id="CHEBI:15378"/>
        <dbReference type="ChEBI" id="CHEBI:29986"/>
        <dbReference type="ChEBI" id="CHEBI:30616"/>
        <dbReference type="ChEBI" id="CHEBI:43474"/>
        <dbReference type="ChEBI" id="CHEBI:83898"/>
        <dbReference type="ChEBI" id="CHEBI:83900"/>
        <dbReference type="ChEBI" id="CHEBI:456216"/>
        <dbReference type="EC" id="6.3.2.9"/>
    </reaction>
</comment>
<comment type="pathway">
    <text evidence="1">Cell wall biogenesis; peptidoglycan biosynthesis.</text>
</comment>
<comment type="subcellular location">
    <subcellularLocation>
        <location evidence="1">Cytoplasm</location>
    </subcellularLocation>
</comment>
<comment type="similarity">
    <text evidence="1">Belongs to the MurCDEF family.</text>
</comment>
<keyword id="KW-0067">ATP-binding</keyword>
<keyword id="KW-0131">Cell cycle</keyword>
<keyword id="KW-0132">Cell division</keyword>
<keyword id="KW-0133">Cell shape</keyword>
<keyword id="KW-0961">Cell wall biogenesis/degradation</keyword>
<keyword id="KW-0963">Cytoplasm</keyword>
<keyword id="KW-0436">Ligase</keyword>
<keyword id="KW-0547">Nucleotide-binding</keyword>
<keyword id="KW-0573">Peptidoglycan synthesis</keyword>
<dbReference type="EC" id="6.3.2.9" evidence="1"/>
<dbReference type="EMBL" id="BX897699">
    <property type="protein sequence ID" value="CAF27911.1"/>
    <property type="molecule type" value="Genomic_DNA"/>
</dbReference>
<dbReference type="RefSeq" id="WP_011180974.1">
    <property type="nucleotide sequence ID" value="NC_005956.1"/>
</dbReference>
<dbReference type="SMR" id="Q6G2Q3"/>
<dbReference type="PaxDb" id="283166-BH11260"/>
<dbReference type="EnsemblBacteria" id="CAF27911">
    <property type="protein sequence ID" value="CAF27911"/>
    <property type="gene ID" value="BH11260"/>
</dbReference>
<dbReference type="GeneID" id="92985740"/>
<dbReference type="KEGG" id="bhe:BH11260"/>
<dbReference type="eggNOG" id="COG0771">
    <property type="taxonomic scope" value="Bacteria"/>
</dbReference>
<dbReference type="OrthoDB" id="9809796at2"/>
<dbReference type="UniPathway" id="UPA00219"/>
<dbReference type="Proteomes" id="UP000000421">
    <property type="component" value="Chromosome"/>
</dbReference>
<dbReference type="GO" id="GO:0005737">
    <property type="term" value="C:cytoplasm"/>
    <property type="evidence" value="ECO:0007669"/>
    <property type="project" value="UniProtKB-SubCell"/>
</dbReference>
<dbReference type="GO" id="GO:0005524">
    <property type="term" value="F:ATP binding"/>
    <property type="evidence" value="ECO:0007669"/>
    <property type="project" value="UniProtKB-UniRule"/>
</dbReference>
<dbReference type="GO" id="GO:0004326">
    <property type="term" value="F:tetrahydrofolylpolyglutamate synthase activity"/>
    <property type="evidence" value="ECO:0007669"/>
    <property type="project" value="InterPro"/>
</dbReference>
<dbReference type="GO" id="GO:0008764">
    <property type="term" value="F:UDP-N-acetylmuramoylalanine-D-glutamate ligase activity"/>
    <property type="evidence" value="ECO:0007669"/>
    <property type="project" value="UniProtKB-UniRule"/>
</dbReference>
<dbReference type="GO" id="GO:0051301">
    <property type="term" value="P:cell division"/>
    <property type="evidence" value="ECO:0007669"/>
    <property type="project" value="UniProtKB-KW"/>
</dbReference>
<dbReference type="GO" id="GO:0071555">
    <property type="term" value="P:cell wall organization"/>
    <property type="evidence" value="ECO:0007669"/>
    <property type="project" value="UniProtKB-KW"/>
</dbReference>
<dbReference type="GO" id="GO:0009252">
    <property type="term" value="P:peptidoglycan biosynthetic process"/>
    <property type="evidence" value="ECO:0007669"/>
    <property type="project" value="UniProtKB-UniRule"/>
</dbReference>
<dbReference type="GO" id="GO:0008360">
    <property type="term" value="P:regulation of cell shape"/>
    <property type="evidence" value="ECO:0007669"/>
    <property type="project" value="UniProtKB-KW"/>
</dbReference>
<dbReference type="Gene3D" id="3.90.190.20">
    <property type="entry name" value="Mur ligase, C-terminal domain"/>
    <property type="match status" value="1"/>
</dbReference>
<dbReference type="Gene3D" id="3.40.1190.10">
    <property type="entry name" value="Mur-like, catalytic domain"/>
    <property type="match status" value="1"/>
</dbReference>
<dbReference type="Gene3D" id="3.40.50.720">
    <property type="entry name" value="NAD(P)-binding Rossmann-like Domain"/>
    <property type="match status" value="1"/>
</dbReference>
<dbReference type="HAMAP" id="MF_00639">
    <property type="entry name" value="MurD"/>
    <property type="match status" value="1"/>
</dbReference>
<dbReference type="InterPro" id="IPR018109">
    <property type="entry name" value="Folylpolyglutamate_synth_CS"/>
</dbReference>
<dbReference type="InterPro" id="IPR036565">
    <property type="entry name" value="Mur-like_cat_sf"/>
</dbReference>
<dbReference type="InterPro" id="IPR036615">
    <property type="entry name" value="Mur_ligase_C_dom_sf"/>
</dbReference>
<dbReference type="InterPro" id="IPR013221">
    <property type="entry name" value="Mur_ligase_cen"/>
</dbReference>
<dbReference type="InterPro" id="IPR005762">
    <property type="entry name" value="MurD"/>
</dbReference>
<dbReference type="NCBIfam" id="TIGR01087">
    <property type="entry name" value="murD"/>
    <property type="match status" value="1"/>
</dbReference>
<dbReference type="PANTHER" id="PTHR43692">
    <property type="entry name" value="UDP-N-ACETYLMURAMOYLALANINE--D-GLUTAMATE LIGASE"/>
    <property type="match status" value="1"/>
</dbReference>
<dbReference type="PANTHER" id="PTHR43692:SF1">
    <property type="entry name" value="UDP-N-ACETYLMURAMOYLALANINE--D-GLUTAMATE LIGASE"/>
    <property type="match status" value="1"/>
</dbReference>
<dbReference type="Pfam" id="PF08245">
    <property type="entry name" value="Mur_ligase_M"/>
    <property type="match status" value="1"/>
</dbReference>
<dbReference type="SUPFAM" id="SSF51984">
    <property type="entry name" value="MurCD N-terminal domain"/>
    <property type="match status" value="1"/>
</dbReference>
<dbReference type="SUPFAM" id="SSF53623">
    <property type="entry name" value="MurD-like peptide ligases, catalytic domain"/>
    <property type="match status" value="1"/>
</dbReference>
<dbReference type="SUPFAM" id="SSF53244">
    <property type="entry name" value="MurD-like peptide ligases, peptide-binding domain"/>
    <property type="match status" value="1"/>
</dbReference>
<organism>
    <name type="scientific">Bartonella henselae (strain ATCC 49882 / DSM 28221 / CCUG 30454 / Houston 1)</name>
    <name type="common">Rochalimaea henselae</name>
    <dbReference type="NCBI Taxonomy" id="283166"/>
    <lineage>
        <taxon>Bacteria</taxon>
        <taxon>Pseudomonadati</taxon>
        <taxon>Pseudomonadota</taxon>
        <taxon>Alphaproteobacteria</taxon>
        <taxon>Hyphomicrobiales</taxon>
        <taxon>Bartonellaceae</taxon>
        <taxon>Bartonella</taxon>
    </lineage>
</organism>
<evidence type="ECO:0000255" key="1">
    <source>
        <dbReference type="HAMAP-Rule" id="MF_00639"/>
    </source>
</evidence>
<protein>
    <recommendedName>
        <fullName evidence="1">UDP-N-acetylmuramoylalanine--D-glutamate ligase</fullName>
        <ecNumber evidence="1">6.3.2.9</ecNumber>
    </recommendedName>
    <alternativeName>
        <fullName evidence="1">D-glutamic acid-adding enzyme</fullName>
    </alternativeName>
    <alternativeName>
        <fullName evidence="1">UDP-N-acetylmuramoyl-L-alanyl-D-glutamate synthetase</fullName>
    </alternativeName>
</protein>
<proteinExistence type="inferred from homology"/>
<gene>
    <name evidence="1" type="primary">murD</name>
    <name type="ordered locus">BH11260</name>
</gene>
<name>MURD_BARHE</name>